<gene>
    <name type="primary">Dhps</name>
</gene>
<feature type="chain" id="PRO_0000134470" description="Deoxyhypusine synthase">
    <location>
        <begin position="1"/>
        <end position="369"/>
    </location>
</feature>
<feature type="active site" description="Nucleophile" evidence="1">
    <location>
        <position position="329"/>
    </location>
</feature>
<feature type="binding site" evidence="1">
    <location>
        <begin position="105"/>
        <end position="109"/>
    </location>
    <ligand>
        <name>NAD(+)</name>
        <dbReference type="ChEBI" id="CHEBI:57540"/>
    </ligand>
</feature>
<feature type="binding site" evidence="1">
    <location>
        <begin position="131"/>
        <end position="133"/>
    </location>
    <ligand>
        <name>NAD(+)</name>
        <dbReference type="ChEBI" id="CHEBI:57540"/>
    </ligand>
</feature>
<feature type="binding site" evidence="1">
    <location>
        <begin position="136"/>
        <end position="137"/>
    </location>
    <ligand>
        <name>spermidine</name>
        <dbReference type="ChEBI" id="CHEBI:57834"/>
    </ligand>
</feature>
<feature type="binding site" evidence="1">
    <location>
        <position position="137"/>
    </location>
    <ligand>
        <name>NAD(+)</name>
        <dbReference type="ChEBI" id="CHEBI:57540"/>
    </ligand>
</feature>
<feature type="binding site" evidence="1">
    <location>
        <position position="238"/>
    </location>
    <ligand>
        <name>NAD(+)</name>
        <dbReference type="ChEBI" id="CHEBI:57540"/>
    </ligand>
</feature>
<feature type="binding site" evidence="1">
    <location>
        <position position="243"/>
    </location>
    <ligand>
        <name>spermidine</name>
        <dbReference type="ChEBI" id="CHEBI:57834"/>
    </ligand>
</feature>
<feature type="binding site" evidence="1">
    <location>
        <position position="283"/>
    </location>
    <ligand>
        <name>NAD(+)</name>
        <dbReference type="ChEBI" id="CHEBI:57540"/>
    </ligand>
</feature>
<feature type="binding site" evidence="1">
    <location>
        <position position="288"/>
    </location>
    <ligand>
        <name>spermidine</name>
        <dbReference type="ChEBI" id="CHEBI:57834"/>
    </ligand>
</feature>
<feature type="binding site" evidence="1">
    <location>
        <begin position="308"/>
        <end position="309"/>
    </location>
    <ligand>
        <name>NAD(+)</name>
        <dbReference type="ChEBI" id="CHEBI:57540"/>
    </ligand>
</feature>
<feature type="binding site" evidence="1">
    <location>
        <begin position="314"/>
        <end position="316"/>
    </location>
    <ligand>
        <name>spermidine</name>
        <dbReference type="ChEBI" id="CHEBI:57834"/>
    </ligand>
</feature>
<feature type="binding site" evidence="1">
    <location>
        <begin position="323"/>
        <end position="329"/>
    </location>
    <ligand>
        <name>spermidine</name>
        <dbReference type="ChEBI" id="CHEBI:57834"/>
    </ligand>
</feature>
<feature type="binding site" evidence="1">
    <location>
        <begin position="342"/>
        <end position="343"/>
    </location>
    <ligand>
        <name>NAD(+)</name>
        <dbReference type="ChEBI" id="CHEBI:57540"/>
    </ligand>
</feature>
<name>DHYS_RAT</name>
<proteinExistence type="evidence at transcript level"/>
<organism>
    <name type="scientific">Rattus norvegicus</name>
    <name type="common">Rat</name>
    <dbReference type="NCBI Taxonomy" id="10116"/>
    <lineage>
        <taxon>Eukaryota</taxon>
        <taxon>Metazoa</taxon>
        <taxon>Chordata</taxon>
        <taxon>Craniata</taxon>
        <taxon>Vertebrata</taxon>
        <taxon>Euteleostomi</taxon>
        <taxon>Mammalia</taxon>
        <taxon>Eutheria</taxon>
        <taxon>Euarchontoglires</taxon>
        <taxon>Glires</taxon>
        <taxon>Rodentia</taxon>
        <taxon>Myomorpha</taxon>
        <taxon>Muroidea</taxon>
        <taxon>Muridae</taxon>
        <taxon>Murinae</taxon>
        <taxon>Rattus</taxon>
    </lineage>
</organism>
<reference key="1">
    <citation type="journal article" date="2004" name="Genome Res.">
        <title>The status, quality, and expansion of the NIH full-length cDNA project: the Mammalian Gene Collection (MGC).</title>
        <authorList>
            <consortium name="The MGC Project Team"/>
        </authorList>
    </citation>
    <scope>NUCLEOTIDE SEQUENCE [LARGE SCALE MRNA]</scope>
    <source>
        <tissue>Testis</tissue>
    </source>
</reference>
<evidence type="ECO:0000250" key="1"/>
<evidence type="ECO:0000250" key="2">
    <source>
        <dbReference type="UniProtKB" id="P49366"/>
    </source>
</evidence>
<evidence type="ECO:0000305" key="3"/>
<comment type="function">
    <text evidence="2">Catalyzes the NAD-dependent oxidative cleavage of spermidine and the subsequent transfer of the butylamine moiety of spermidine to the epsilon-amino group of a critical lysine residue of the eIF-5A precursor protein to form the intermediate deoxyhypusine residue. This is the first step of the post-translational modification of that lysine into an unusual amino acid residue named hypusine. Hypusination is unique to mature eIF-5A factor and is essential for its function.</text>
</comment>
<comment type="catalytic activity">
    <reaction>
        <text>[eIF5A protein]-L-lysine + spermidine = [eIF5A protein]-deoxyhypusine + propane-1,3-diamine</text>
        <dbReference type="Rhea" id="RHEA:33299"/>
        <dbReference type="Rhea" id="RHEA-COMP:10143"/>
        <dbReference type="Rhea" id="RHEA-COMP:10144"/>
        <dbReference type="ChEBI" id="CHEBI:29969"/>
        <dbReference type="ChEBI" id="CHEBI:57484"/>
        <dbReference type="ChEBI" id="CHEBI:57834"/>
        <dbReference type="ChEBI" id="CHEBI:82657"/>
        <dbReference type="EC" id="2.5.1.46"/>
    </reaction>
</comment>
<comment type="cofactor">
    <cofactor evidence="1">
        <name>NAD(+)</name>
        <dbReference type="ChEBI" id="CHEBI:57540"/>
    </cofactor>
</comment>
<comment type="pathway">
    <text>Protein modification; eIF5A hypusination.</text>
</comment>
<comment type="similarity">
    <text evidence="3">Belongs to the deoxyhypusine synthase family.</text>
</comment>
<sequence>MEGTPSGAAPSSALAAVLKHSSALPPESAQVQGYDFNRGVDYHALLEAYGTTGFQATNFGRAVQQVNAMIEKKLEPLAVDEDHHEDLTQSRRPLTGCTIFLGYTSNLISSGIRETIRYLVQHNMVDVLVTTAGGVEEDLIKCLAPTYLGEFSLRGKELRENGINRIGNLLVPNDNYCKFEDWLMPILDQMVQEQNTEGVKWTPSKMISRLGKEINNPESVYYWAHKNHIPVLSPALTDGSLGDMIFFHSYKNPGLVLDIVEDLRLINMQAIFAKRTGMIILGGGVVKHHIANANLMRNGADYAVYINTAQEFDGSDSGARPDEAVSWGKIRMDAQPVKVYADASLVFPLLVAETFAQKADAFRAEKNED</sequence>
<keyword id="KW-0386">Hypusine biosynthesis</keyword>
<keyword id="KW-0520">NAD</keyword>
<keyword id="KW-1185">Reference proteome</keyword>
<keyword id="KW-0808">Transferase</keyword>
<protein>
    <recommendedName>
        <fullName>Deoxyhypusine synthase</fullName>
        <shortName>DHS</shortName>
        <ecNumber>2.5.1.46</ecNumber>
    </recommendedName>
</protein>
<dbReference type="EC" id="2.5.1.46"/>
<dbReference type="EMBL" id="BC079188">
    <property type="protein sequence ID" value="AAH79188.1"/>
    <property type="molecule type" value="mRNA"/>
</dbReference>
<dbReference type="RefSeq" id="NP_001004207.1">
    <property type="nucleotide sequence ID" value="NM_001004207.1"/>
</dbReference>
<dbReference type="SMR" id="Q6AY53"/>
<dbReference type="FunCoup" id="Q6AY53">
    <property type="interactions" value="2753"/>
</dbReference>
<dbReference type="IntAct" id="Q6AY53">
    <property type="interactions" value="1"/>
</dbReference>
<dbReference type="MINT" id="Q6AY53"/>
<dbReference type="STRING" id="10116.ENSRNOP00000005656"/>
<dbReference type="BindingDB" id="Q6AY53"/>
<dbReference type="ChEMBL" id="CHEMBL2539"/>
<dbReference type="PhosphoSitePlus" id="Q6AY53"/>
<dbReference type="jPOST" id="Q6AY53"/>
<dbReference type="PaxDb" id="10116-ENSRNOP00000005656"/>
<dbReference type="Ensembl" id="ENSRNOT00000005656.6">
    <property type="protein sequence ID" value="ENSRNOP00000005656.3"/>
    <property type="gene ID" value="ENSRNOG00000004219.8"/>
</dbReference>
<dbReference type="GeneID" id="288923"/>
<dbReference type="KEGG" id="rno:288923"/>
<dbReference type="AGR" id="RGD:1303326"/>
<dbReference type="CTD" id="1725"/>
<dbReference type="RGD" id="1303326">
    <property type="gene designation" value="Dhps"/>
</dbReference>
<dbReference type="eggNOG" id="KOG2924">
    <property type="taxonomic scope" value="Eukaryota"/>
</dbReference>
<dbReference type="GeneTree" id="ENSGT00390000008063"/>
<dbReference type="HOGENOM" id="CLU_039781_0_0_1"/>
<dbReference type="InParanoid" id="Q6AY53"/>
<dbReference type="OMA" id="HSIINAN"/>
<dbReference type="OrthoDB" id="294378at2759"/>
<dbReference type="PhylomeDB" id="Q6AY53"/>
<dbReference type="TreeFam" id="TF300625"/>
<dbReference type="Reactome" id="R-RNO-204626">
    <property type="pathway name" value="Hypusine synthesis from eIF5A-lysine"/>
</dbReference>
<dbReference type="UniPathway" id="UPA00354"/>
<dbReference type="PRO" id="PR:Q6AY53"/>
<dbReference type="Proteomes" id="UP000002494">
    <property type="component" value="Chromosome 19"/>
</dbReference>
<dbReference type="Bgee" id="ENSRNOG00000004219">
    <property type="expression patterns" value="Expressed in skeletal muscle tissue and 20 other cell types or tissues"/>
</dbReference>
<dbReference type="GO" id="GO:0005737">
    <property type="term" value="C:cytoplasm"/>
    <property type="evidence" value="ECO:0000318"/>
    <property type="project" value="GO_Central"/>
</dbReference>
<dbReference type="GO" id="GO:0005829">
    <property type="term" value="C:cytosol"/>
    <property type="evidence" value="ECO:0000266"/>
    <property type="project" value="RGD"/>
</dbReference>
<dbReference type="GO" id="GO:0034038">
    <property type="term" value="F:deoxyhypusine synthase activity"/>
    <property type="evidence" value="ECO:0000314"/>
    <property type="project" value="RGD"/>
</dbReference>
<dbReference type="GO" id="GO:0042802">
    <property type="term" value="F:identical protein binding"/>
    <property type="evidence" value="ECO:0000353"/>
    <property type="project" value="RGD"/>
</dbReference>
<dbReference type="GO" id="GO:0042593">
    <property type="term" value="P:glucose homeostasis"/>
    <property type="evidence" value="ECO:0000266"/>
    <property type="project" value="RGD"/>
</dbReference>
<dbReference type="GO" id="GO:0042102">
    <property type="term" value="P:positive regulation of T cell proliferation"/>
    <property type="evidence" value="ECO:0000266"/>
    <property type="project" value="RGD"/>
</dbReference>
<dbReference type="GO" id="GO:0046203">
    <property type="term" value="P:spermidine catabolic process"/>
    <property type="evidence" value="ECO:0000314"/>
    <property type="project" value="RGD"/>
</dbReference>
<dbReference type="GO" id="GO:0008216">
    <property type="term" value="P:spermidine metabolic process"/>
    <property type="evidence" value="ECO:0000266"/>
    <property type="project" value="RGD"/>
</dbReference>
<dbReference type="FunFam" id="3.40.910.10:FF:000010">
    <property type="entry name" value="Deoxyhypusine synthase"/>
    <property type="match status" value="1"/>
</dbReference>
<dbReference type="Gene3D" id="3.40.910.10">
    <property type="entry name" value="Deoxyhypusine synthase"/>
    <property type="match status" value="1"/>
</dbReference>
<dbReference type="InterPro" id="IPR002773">
    <property type="entry name" value="Deoxyhypusine_synthase"/>
</dbReference>
<dbReference type="InterPro" id="IPR036982">
    <property type="entry name" value="Deoxyhypusine_synthase_sf"/>
</dbReference>
<dbReference type="InterPro" id="IPR029035">
    <property type="entry name" value="DHS-like_NAD/FAD-binding_dom"/>
</dbReference>
<dbReference type="NCBIfam" id="TIGR00321">
    <property type="entry name" value="dhys"/>
    <property type="match status" value="1"/>
</dbReference>
<dbReference type="PANTHER" id="PTHR11703">
    <property type="entry name" value="DEOXYHYPUSINE SYNTHASE"/>
    <property type="match status" value="1"/>
</dbReference>
<dbReference type="PANTHER" id="PTHR11703:SF0">
    <property type="entry name" value="DEOXYHYPUSINE SYNTHASE"/>
    <property type="match status" value="1"/>
</dbReference>
<dbReference type="Pfam" id="PF01916">
    <property type="entry name" value="DS"/>
    <property type="match status" value="1"/>
</dbReference>
<dbReference type="SUPFAM" id="SSF52467">
    <property type="entry name" value="DHS-like NAD/FAD-binding domain"/>
    <property type="match status" value="1"/>
</dbReference>
<accession>Q6AY53</accession>